<feature type="chain" id="PRO_1000063815" description="3-isopropylmalate dehydratase small subunit">
    <location>
        <begin position="1"/>
        <end position="201"/>
    </location>
</feature>
<accession>Q2J3A7</accession>
<evidence type="ECO:0000255" key="1">
    <source>
        <dbReference type="HAMAP-Rule" id="MF_01031"/>
    </source>
</evidence>
<sequence>MDKFTTLEGVAAPLKIINVDTDMIIPKQYLKTIKRTGLGKGLFSEQRYQDDGSENPDFILNKPAYRSAKILVAGDNFGCGSSREHAPWALLDFGIRCVISTSFGDIFYNNCFKNGVLPIRVSQDDLDKLFDDAERGSNATVTIDLPAQEIRGPDGGTVKFEIDPFRKHCLINGLDDIGLTLEKKASIDSYEDKLKTERAWA</sequence>
<reference key="1">
    <citation type="submission" date="2006-01" db="EMBL/GenBank/DDBJ databases">
        <title>Complete sequence of Rhodopseudomonas palustris HaA2.</title>
        <authorList>
            <consortium name="US DOE Joint Genome Institute"/>
            <person name="Copeland A."/>
            <person name="Lucas S."/>
            <person name="Lapidus A."/>
            <person name="Barry K."/>
            <person name="Detter J.C."/>
            <person name="Glavina T."/>
            <person name="Hammon N."/>
            <person name="Israni S."/>
            <person name="Pitluck S."/>
            <person name="Chain P."/>
            <person name="Malfatti S."/>
            <person name="Shin M."/>
            <person name="Vergez L."/>
            <person name="Schmutz J."/>
            <person name="Larimer F."/>
            <person name="Land M."/>
            <person name="Hauser L."/>
            <person name="Pelletier D.A."/>
            <person name="Kyrpides N."/>
            <person name="Anderson I."/>
            <person name="Oda Y."/>
            <person name="Harwood C.S."/>
            <person name="Richardson P."/>
        </authorList>
    </citation>
    <scope>NUCLEOTIDE SEQUENCE [LARGE SCALE GENOMIC DNA]</scope>
    <source>
        <strain>HaA2</strain>
    </source>
</reference>
<organism>
    <name type="scientific">Rhodopseudomonas palustris (strain HaA2)</name>
    <dbReference type="NCBI Taxonomy" id="316058"/>
    <lineage>
        <taxon>Bacteria</taxon>
        <taxon>Pseudomonadati</taxon>
        <taxon>Pseudomonadota</taxon>
        <taxon>Alphaproteobacteria</taxon>
        <taxon>Hyphomicrobiales</taxon>
        <taxon>Nitrobacteraceae</taxon>
        <taxon>Rhodopseudomonas</taxon>
    </lineage>
</organism>
<dbReference type="EC" id="4.2.1.33" evidence="1"/>
<dbReference type="EMBL" id="CP000250">
    <property type="protein sequence ID" value="ABD05053.1"/>
    <property type="molecule type" value="Genomic_DNA"/>
</dbReference>
<dbReference type="RefSeq" id="WP_011439243.1">
    <property type="nucleotide sequence ID" value="NC_007778.1"/>
</dbReference>
<dbReference type="SMR" id="Q2J3A7"/>
<dbReference type="STRING" id="316058.RPB_0342"/>
<dbReference type="KEGG" id="rpb:RPB_0342"/>
<dbReference type="eggNOG" id="COG0066">
    <property type="taxonomic scope" value="Bacteria"/>
</dbReference>
<dbReference type="HOGENOM" id="CLU_081378_0_3_5"/>
<dbReference type="OrthoDB" id="9777465at2"/>
<dbReference type="UniPathway" id="UPA00048">
    <property type="reaction ID" value="UER00071"/>
</dbReference>
<dbReference type="Proteomes" id="UP000008809">
    <property type="component" value="Chromosome"/>
</dbReference>
<dbReference type="GO" id="GO:0009316">
    <property type="term" value="C:3-isopropylmalate dehydratase complex"/>
    <property type="evidence" value="ECO:0007669"/>
    <property type="project" value="InterPro"/>
</dbReference>
<dbReference type="GO" id="GO:0003861">
    <property type="term" value="F:3-isopropylmalate dehydratase activity"/>
    <property type="evidence" value="ECO:0007669"/>
    <property type="project" value="UniProtKB-UniRule"/>
</dbReference>
<dbReference type="GO" id="GO:0009098">
    <property type="term" value="P:L-leucine biosynthetic process"/>
    <property type="evidence" value="ECO:0007669"/>
    <property type="project" value="UniProtKB-UniRule"/>
</dbReference>
<dbReference type="CDD" id="cd01577">
    <property type="entry name" value="IPMI_Swivel"/>
    <property type="match status" value="1"/>
</dbReference>
<dbReference type="FunFam" id="3.20.19.10:FF:000003">
    <property type="entry name" value="3-isopropylmalate dehydratase small subunit"/>
    <property type="match status" value="1"/>
</dbReference>
<dbReference type="Gene3D" id="3.20.19.10">
    <property type="entry name" value="Aconitase, domain 4"/>
    <property type="match status" value="1"/>
</dbReference>
<dbReference type="HAMAP" id="MF_01031">
    <property type="entry name" value="LeuD_type1"/>
    <property type="match status" value="1"/>
</dbReference>
<dbReference type="InterPro" id="IPR004431">
    <property type="entry name" value="3-IsopropMal_deHydase_ssu"/>
</dbReference>
<dbReference type="InterPro" id="IPR015928">
    <property type="entry name" value="Aconitase/3IPM_dehydase_swvl"/>
</dbReference>
<dbReference type="InterPro" id="IPR000573">
    <property type="entry name" value="AconitaseA/IPMdHydase_ssu_swvl"/>
</dbReference>
<dbReference type="InterPro" id="IPR033940">
    <property type="entry name" value="IPMI_Swivel"/>
</dbReference>
<dbReference type="InterPro" id="IPR050075">
    <property type="entry name" value="LeuD"/>
</dbReference>
<dbReference type="NCBIfam" id="TIGR00171">
    <property type="entry name" value="leuD"/>
    <property type="match status" value="1"/>
</dbReference>
<dbReference type="NCBIfam" id="NF002458">
    <property type="entry name" value="PRK01641.1"/>
    <property type="match status" value="1"/>
</dbReference>
<dbReference type="PANTHER" id="PTHR43345:SF5">
    <property type="entry name" value="3-ISOPROPYLMALATE DEHYDRATASE SMALL SUBUNIT"/>
    <property type="match status" value="1"/>
</dbReference>
<dbReference type="PANTHER" id="PTHR43345">
    <property type="entry name" value="3-ISOPROPYLMALATE DEHYDRATASE SMALL SUBUNIT 2-RELATED-RELATED"/>
    <property type="match status" value="1"/>
</dbReference>
<dbReference type="Pfam" id="PF00694">
    <property type="entry name" value="Aconitase_C"/>
    <property type="match status" value="1"/>
</dbReference>
<dbReference type="SUPFAM" id="SSF52016">
    <property type="entry name" value="LeuD/IlvD-like"/>
    <property type="match status" value="1"/>
</dbReference>
<name>LEUD_RHOP2</name>
<keyword id="KW-0028">Amino-acid biosynthesis</keyword>
<keyword id="KW-0100">Branched-chain amino acid biosynthesis</keyword>
<keyword id="KW-0432">Leucine biosynthesis</keyword>
<keyword id="KW-0456">Lyase</keyword>
<keyword id="KW-1185">Reference proteome</keyword>
<gene>
    <name evidence="1" type="primary">leuD</name>
    <name type="ordered locus">RPB_0342</name>
</gene>
<proteinExistence type="inferred from homology"/>
<comment type="function">
    <text evidence="1">Catalyzes the isomerization between 2-isopropylmalate and 3-isopropylmalate, via the formation of 2-isopropylmaleate.</text>
</comment>
<comment type="catalytic activity">
    <reaction evidence="1">
        <text>(2R,3S)-3-isopropylmalate = (2S)-2-isopropylmalate</text>
        <dbReference type="Rhea" id="RHEA:32287"/>
        <dbReference type="ChEBI" id="CHEBI:1178"/>
        <dbReference type="ChEBI" id="CHEBI:35121"/>
        <dbReference type="EC" id="4.2.1.33"/>
    </reaction>
</comment>
<comment type="pathway">
    <text evidence="1">Amino-acid biosynthesis; L-leucine biosynthesis; L-leucine from 3-methyl-2-oxobutanoate: step 2/4.</text>
</comment>
<comment type="subunit">
    <text evidence="1">Heterodimer of LeuC and LeuD.</text>
</comment>
<comment type="similarity">
    <text evidence="1">Belongs to the LeuD family. LeuD type 1 subfamily.</text>
</comment>
<protein>
    <recommendedName>
        <fullName evidence="1">3-isopropylmalate dehydratase small subunit</fullName>
        <ecNumber evidence="1">4.2.1.33</ecNumber>
    </recommendedName>
    <alternativeName>
        <fullName evidence="1">Alpha-IPM isomerase</fullName>
        <shortName evidence="1">IPMI</shortName>
    </alternativeName>
    <alternativeName>
        <fullName evidence="1">Isopropylmalate isomerase</fullName>
    </alternativeName>
</protein>